<dbReference type="EMBL" id="CP001217">
    <property type="protein sequence ID" value="ACJ08422.1"/>
    <property type="molecule type" value="Genomic_DNA"/>
</dbReference>
<dbReference type="SMR" id="B6JNE4"/>
<dbReference type="KEGG" id="hpp:HPP12_1270"/>
<dbReference type="HOGENOM" id="CLU_098428_0_2_7"/>
<dbReference type="Proteomes" id="UP000008198">
    <property type="component" value="Chromosome"/>
</dbReference>
<dbReference type="GO" id="GO:1990904">
    <property type="term" value="C:ribonucleoprotein complex"/>
    <property type="evidence" value="ECO:0007669"/>
    <property type="project" value="UniProtKB-KW"/>
</dbReference>
<dbReference type="GO" id="GO:0005840">
    <property type="term" value="C:ribosome"/>
    <property type="evidence" value="ECO:0007669"/>
    <property type="project" value="UniProtKB-KW"/>
</dbReference>
<dbReference type="GO" id="GO:0019843">
    <property type="term" value="F:rRNA binding"/>
    <property type="evidence" value="ECO:0007669"/>
    <property type="project" value="UniProtKB-UniRule"/>
</dbReference>
<dbReference type="GO" id="GO:0003735">
    <property type="term" value="F:structural constituent of ribosome"/>
    <property type="evidence" value="ECO:0007669"/>
    <property type="project" value="InterPro"/>
</dbReference>
<dbReference type="GO" id="GO:0006412">
    <property type="term" value="P:translation"/>
    <property type="evidence" value="ECO:0007669"/>
    <property type="project" value="UniProtKB-UniRule"/>
</dbReference>
<dbReference type="FunFam" id="3.30.1370.30:FF:000002">
    <property type="entry name" value="30S ribosomal protein S8"/>
    <property type="match status" value="1"/>
</dbReference>
<dbReference type="FunFam" id="3.30.1490.10:FF:000001">
    <property type="entry name" value="30S ribosomal protein S8"/>
    <property type="match status" value="1"/>
</dbReference>
<dbReference type="Gene3D" id="3.30.1370.30">
    <property type="match status" value="1"/>
</dbReference>
<dbReference type="Gene3D" id="3.30.1490.10">
    <property type="match status" value="1"/>
</dbReference>
<dbReference type="HAMAP" id="MF_01302_B">
    <property type="entry name" value="Ribosomal_uS8_B"/>
    <property type="match status" value="1"/>
</dbReference>
<dbReference type="InterPro" id="IPR000630">
    <property type="entry name" value="Ribosomal_uS8"/>
</dbReference>
<dbReference type="InterPro" id="IPR047863">
    <property type="entry name" value="Ribosomal_uS8_CS"/>
</dbReference>
<dbReference type="InterPro" id="IPR035987">
    <property type="entry name" value="Ribosomal_uS8_sf"/>
</dbReference>
<dbReference type="NCBIfam" id="NF001109">
    <property type="entry name" value="PRK00136.1"/>
    <property type="match status" value="1"/>
</dbReference>
<dbReference type="PANTHER" id="PTHR11758">
    <property type="entry name" value="40S RIBOSOMAL PROTEIN S15A"/>
    <property type="match status" value="1"/>
</dbReference>
<dbReference type="Pfam" id="PF00410">
    <property type="entry name" value="Ribosomal_S8"/>
    <property type="match status" value="1"/>
</dbReference>
<dbReference type="SUPFAM" id="SSF56047">
    <property type="entry name" value="Ribosomal protein S8"/>
    <property type="match status" value="1"/>
</dbReference>
<dbReference type="PROSITE" id="PS00053">
    <property type="entry name" value="RIBOSOMAL_S8"/>
    <property type="match status" value="1"/>
</dbReference>
<reference key="1">
    <citation type="submission" date="2008-10" db="EMBL/GenBank/DDBJ databases">
        <title>The complete genome sequence of Helicobacter pylori strain P12.</title>
        <authorList>
            <person name="Fischer W."/>
            <person name="Windhager L."/>
            <person name="Karnholz A."/>
            <person name="Zeiller M."/>
            <person name="Zimmer R."/>
            <person name="Haas R."/>
        </authorList>
    </citation>
    <scope>NUCLEOTIDE SEQUENCE [LARGE SCALE GENOMIC DNA]</scope>
    <source>
        <strain>P12</strain>
    </source>
</reference>
<gene>
    <name evidence="1" type="primary">rpsH</name>
    <name type="ordered locus">HPP12_1270</name>
</gene>
<organism>
    <name type="scientific">Helicobacter pylori (strain P12)</name>
    <dbReference type="NCBI Taxonomy" id="570508"/>
    <lineage>
        <taxon>Bacteria</taxon>
        <taxon>Pseudomonadati</taxon>
        <taxon>Campylobacterota</taxon>
        <taxon>Epsilonproteobacteria</taxon>
        <taxon>Campylobacterales</taxon>
        <taxon>Helicobacteraceae</taxon>
        <taxon>Helicobacter</taxon>
    </lineage>
</organism>
<feature type="chain" id="PRO_1000140565" description="Small ribosomal subunit protein uS8">
    <location>
        <begin position="1"/>
        <end position="131"/>
    </location>
</feature>
<comment type="function">
    <text evidence="1">One of the primary rRNA binding proteins, it binds directly to 16S rRNA central domain where it helps coordinate assembly of the platform of the 30S subunit.</text>
</comment>
<comment type="subunit">
    <text evidence="1">Part of the 30S ribosomal subunit. Contacts proteins S5 and S12.</text>
</comment>
<comment type="similarity">
    <text evidence="1">Belongs to the universal ribosomal protein uS8 family.</text>
</comment>
<sequence>MVNDIIADSLTRLRNASMRRLEFTQLYYAKIVVSILEIFKEKGFIKDFNVKDKDKKQSVYVQLAYDEKGHSKISEVKRLSKPGRRVYKQKNELKRFKNGYGVIVVSTSKGVITNEEAYRQNVGGEVLCSIW</sequence>
<evidence type="ECO:0000255" key="1">
    <source>
        <dbReference type="HAMAP-Rule" id="MF_01302"/>
    </source>
</evidence>
<evidence type="ECO:0000305" key="2"/>
<protein>
    <recommendedName>
        <fullName evidence="1">Small ribosomal subunit protein uS8</fullName>
    </recommendedName>
    <alternativeName>
        <fullName evidence="2">30S ribosomal protein S8</fullName>
    </alternativeName>
</protein>
<name>RS8_HELP2</name>
<accession>B6JNE4</accession>
<keyword id="KW-0687">Ribonucleoprotein</keyword>
<keyword id="KW-0689">Ribosomal protein</keyword>
<keyword id="KW-0694">RNA-binding</keyword>
<keyword id="KW-0699">rRNA-binding</keyword>
<proteinExistence type="inferred from homology"/>